<gene>
    <name type="primary">CKX5</name>
    <name type="synonym">CKX6</name>
    <name type="ordered locus">At1g75450</name>
    <name type="ORF">F1B16.2</name>
</gene>
<sequence>MNREMTSSFLLLTFAICKLIIAVGLNVGPSELLRIGAIDVDGHFTVHPSDLASVSSDFGMLKSPEEPLAVLHPSSAEDVARLVRTAYGSATAFPVSARGHGHSINGQAAAGRNGVVVEMNHGVTGTPKPLVRPDEMYVDVWGGELWVDVLKKTLEHGLAPKSWTDYLYLTVGGTLSNAGISGQAFHHGPQISNVLELDVVTGKGEVMRCSEEENTRLFHGVLGGLGQFGIITRARISLEPAPQRVRWIRVLYSSFKVFTEDQEYLISMHGQLKFDYVEGFVIVDEGLVNNWRSSFFSPRNPVKISSVSSNGSVLYCLEITKNYHDSDSEIVDQEVEILMKKLNFIPTSVFTTDLQYVDFLDRVHKAELKLRSKNLWEVPHPWLNLFVPKSRISDFDKGVFKGILGNKTSGPILIYPMNKDKWDERSSAVTPDEEVFYLVALLRSALTDGEETQKLEYLKDQNRRILEFCEQAKINVKQYLPHHATQEEWVAHFGDKWDRFRSLKAEFDPRHILATGQRIFQNPSLSLFPPSSSSSSAASW</sequence>
<accession>Q67YU0</accession>
<accession>Q9FUJ0</accession>
<accession>Q9FWT3</accession>
<reference key="1">
    <citation type="journal article" date="2001" name="Plant Physiol.">
        <title>Molecular and biochemical characterization of a cytokinin oxidase from maize.</title>
        <authorList>
            <person name="Bilyeu K.D."/>
            <person name="Cole J.L."/>
            <person name="Laskey J.G."/>
            <person name="Riekhof W.R."/>
            <person name="Esparza T.J."/>
            <person name="Kramer M.D."/>
            <person name="Morris R.O."/>
        </authorList>
    </citation>
    <scope>NUCLEOTIDE SEQUENCE [MRNA]</scope>
</reference>
<reference key="2">
    <citation type="journal article" date="2000" name="Nature">
        <title>Sequence and analysis of chromosome 1 of the plant Arabidopsis thaliana.</title>
        <authorList>
            <person name="Theologis A."/>
            <person name="Ecker J.R."/>
            <person name="Palm C.J."/>
            <person name="Federspiel N.A."/>
            <person name="Kaul S."/>
            <person name="White O."/>
            <person name="Alonso J."/>
            <person name="Altafi H."/>
            <person name="Araujo R."/>
            <person name="Bowman C.L."/>
            <person name="Brooks S.Y."/>
            <person name="Buehler E."/>
            <person name="Chan A."/>
            <person name="Chao Q."/>
            <person name="Chen H."/>
            <person name="Cheuk R.F."/>
            <person name="Chin C.W."/>
            <person name="Chung M.K."/>
            <person name="Conn L."/>
            <person name="Conway A.B."/>
            <person name="Conway A.R."/>
            <person name="Creasy T.H."/>
            <person name="Dewar K."/>
            <person name="Dunn P."/>
            <person name="Etgu P."/>
            <person name="Feldblyum T.V."/>
            <person name="Feng J.-D."/>
            <person name="Fong B."/>
            <person name="Fujii C.Y."/>
            <person name="Gill J.E."/>
            <person name="Goldsmith A.D."/>
            <person name="Haas B."/>
            <person name="Hansen N.F."/>
            <person name="Hughes B."/>
            <person name="Huizar L."/>
            <person name="Hunter J.L."/>
            <person name="Jenkins J."/>
            <person name="Johnson-Hopson C."/>
            <person name="Khan S."/>
            <person name="Khaykin E."/>
            <person name="Kim C.J."/>
            <person name="Koo H.L."/>
            <person name="Kremenetskaia I."/>
            <person name="Kurtz D.B."/>
            <person name="Kwan A."/>
            <person name="Lam B."/>
            <person name="Langin-Hooper S."/>
            <person name="Lee A."/>
            <person name="Lee J.M."/>
            <person name="Lenz C.A."/>
            <person name="Li J.H."/>
            <person name="Li Y.-P."/>
            <person name="Lin X."/>
            <person name="Liu S.X."/>
            <person name="Liu Z.A."/>
            <person name="Luros J.S."/>
            <person name="Maiti R."/>
            <person name="Marziali A."/>
            <person name="Militscher J."/>
            <person name="Miranda M."/>
            <person name="Nguyen M."/>
            <person name="Nierman W.C."/>
            <person name="Osborne B.I."/>
            <person name="Pai G."/>
            <person name="Peterson J."/>
            <person name="Pham P.K."/>
            <person name="Rizzo M."/>
            <person name="Rooney T."/>
            <person name="Rowley D."/>
            <person name="Sakano H."/>
            <person name="Salzberg S.L."/>
            <person name="Schwartz J.R."/>
            <person name="Shinn P."/>
            <person name="Southwick A.M."/>
            <person name="Sun H."/>
            <person name="Tallon L.J."/>
            <person name="Tambunga G."/>
            <person name="Toriumi M.J."/>
            <person name="Town C.D."/>
            <person name="Utterback T."/>
            <person name="Van Aken S."/>
            <person name="Vaysberg M."/>
            <person name="Vysotskaia V.S."/>
            <person name="Walker M."/>
            <person name="Wu D."/>
            <person name="Yu G."/>
            <person name="Fraser C.M."/>
            <person name="Venter J.C."/>
            <person name="Davis R.W."/>
        </authorList>
    </citation>
    <scope>NUCLEOTIDE SEQUENCE [LARGE SCALE GENOMIC DNA]</scope>
    <source>
        <strain>cv. Columbia</strain>
    </source>
</reference>
<reference key="3">
    <citation type="journal article" date="2017" name="Plant J.">
        <title>Araport11: a complete reannotation of the Arabidopsis thaliana reference genome.</title>
        <authorList>
            <person name="Cheng C.Y."/>
            <person name="Krishnakumar V."/>
            <person name="Chan A.P."/>
            <person name="Thibaud-Nissen F."/>
            <person name="Schobel S."/>
            <person name="Town C.D."/>
        </authorList>
    </citation>
    <scope>GENOME REANNOTATION</scope>
    <source>
        <strain>cv. Columbia</strain>
    </source>
</reference>
<reference key="4">
    <citation type="submission" date="2004-09" db="EMBL/GenBank/DDBJ databases">
        <title>Large-scale analysis of RIKEN Arabidopsis full-length (RAFL) cDNAs.</title>
        <authorList>
            <person name="Totoki Y."/>
            <person name="Seki M."/>
            <person name="Ishida J."/>
            <person name="Nakajima M."/>
            <person name="Enju A."/>
            <person name="Kamiya A."/>
            <person name="Narusaka M."/>
            <person name="Shin-i T."/>
            <person name="Nakagawa M."/>
            <person name="Sakamoto N."/>
            <person name="Oishi K."/>
            <person name="Kohara Y."/>
            <person name="Kobayashi M."/>
            <person name="Toyoda A."/>
            <person name="Sakaki Y."/>
            <person name="Sakurai T."/>
            <person name="Iida K."/>
            <person name="Akiyama K."/>
            <person name="Satou M."/>
            <person name="Toyoda T."/>
            <person name="Konagaya A."/>
            <person name="Carninci P."/>
            <person name="Kawai J."/>
            <person name="Hayashizaki Y."/>
            <person name="Shinozaki K."/>
        </authorList>
    </citation>
    <scope>NUCLEOTIDE SEQUENCE [LARGE SCALE MRNA]</scope>
    <source>
        <strain>cv. Columbia</strain>
    </source>
</reference>
<reference key="5">
    <citation type="journal article" date="2003" name="Plant Cell">
        <title>Cytokinin-deficient transgenic Arabidopsis plants show multiple developmental alterations indicating opposite functions of cytokinins in the regulation of shoot and root meristem activity.</title>
        <authorList>
            <person name="Werner T."/>
            <person name="Motyka V."/>
            <person name="Laucou V."/>
            <person name="Smets R."/>
            <person name="Van Onckelen H."/>
            <person name="Schmulling T."/>
        </authorList>
    </citation>
    <scope>FUNCTION</scope>
    <scope>DEVELOPMENTAL STAGE</scope>
    <scope>TISSUE SPECIFICITY</scope>
</reference>
<reference key="6">
    <citation type="journal article" date="2003" name="J. Plant Res.">
        <title>Structure and function of cytokinin oxidase/dehydrogenase genes of maize, rice, Arabidopsis and other species.</title>
        <authorList>
            <person name="Schmuelling T."/>
            <person name="Werner T."/>
            <person name="Riefler M."/>
            <person name="Krupkova E."/>
            <person name="Bartrina y Manns I."/>
        </authorList>
    </citation>
    <scope>REVIEW</scope>
    <scope>NOMENCLATURE</scope>
</reference>
<reference key="7">
    <citation type="journal article" date="2011" name="Plant Cell">
        <title>Cytokinin regulates the activity of reproductive meristems, flower organ size, ovule formation, and thus seed yield in Arabidopsis thaliana.</title>
        <authorList>
            <person name="Bartrina I."/>
            <person name="Otto E."/>
            <person name="Strnad M."/>
            <person name="Werner T."/>
            <person name="Schmuelling T."/>
        </authorList>
    </citation>
    <scope>FUNCTION</scope>
</reference>
<evidence type="ECO:0000250" key="1"/>
<evidence type="ECO:0000250" key="2">
    <source>
        <dbReference type="UniProtKB" id="Q9FUJ1"/>
    </source>
</evidence>
<evidence type="ECO:0000250" key="3">
    <source>
        <dbReference type="UniProtKB" id="Q9T0N8"/>
    </source>
</evidence>
<evidence type="ECO:0000255" key="4"/>
<evidence type="ECO:0000255" key="5">
    <source>
        <dbReference type="PROSITE-ProRule" id="PRU00718"/>
    </source>
</evidence>
<evidence type="ECO:0000269" key="6">
    <source>
    </source>
</evidence>
<evidence type="ECO:0000269" key="7">
    <source>
    </source>
</evidence>
<evidence type="ECO:0000305" key="8"/>
<feature type="signal peptide" evidence="4">
    <location>
        <begin position="1"/>
        <end position="22"/>
    </location>
</feature>
<feature type="chain" id="PRO_0000020422" description="Cytokinin dehydrogenase 5">
    <location>
        <begin position="23"/>
        <end position="540"/>
    </location>
</feature>
<feature type="domain" description="FAD-binding PCMH-type" evidence="5">
    <location>
        <begin position="63"/>
        <end position="241"/>
    </location>
</feature>
<feature type="binding site" evidence="2">
    <location>
        <position position="97"/>
    </location>
    <ligand>
        <name>FAD</name>
        <dbReference type="ChEBI" id="CHEBI:57692"/>
    </ligand>
</feature>
<feature type="binding site" evidence="3">
    <location>
        <position position="99"/>
    </location>
    <ligand>
        <name>FAD</name>
        <dbReference type="ChEBI" id="CHEBI:57692"/>
    </ligand>
</feature>
<feature type="binding site" evidence="3">
    <location>
        <position position="101"/>
    </location>
    <ligand>
        <name>FAD</name>
        <dbReference type="ChEBI" id="CHEBI:57692"/>
    </ligand>
</feature>
<feature type="binding site" evidence="3">
    <location>
        <position position="103"/>
    </location>
    <ligand>
        <name>FAD</name>
        <dbReference type="ChEBI" id="CHEBI:57692"/>
    </ligand>
</feature>
<feature type="binding site" evidence="3">
    <location>
        <position position="107"/>
    </location>
    <ligand>
        <name>FAD</name>
        <dbReference type="ChEBI" id="CHEBI:57692"/>
    </ligand>
</feature>
<feature type="binding site" evidence="3">
    <location>
        <position position="165"/>
    </location>
    <ligand>
        <name>FAD</name>
        <dbReference type="ChEBI" id="CHEBI:57692"/>
    </ligand>
</feature>
<feature type="binding site" evidence="3">
    <location>
        <position position="170"/>
    </location>
    <ligand>
        <name>FAD</name>
        <dbReference type="ChEBI" id="CHEBI:57692"/>
    </ligand>
</feature>
<feature type="binding site" evidence="3">
    <location>
        <position position="176"/>
    </location>
    <ligand>
        <name>FAD</name>
        <dbReference type="ChEBI" id="CHEBI:57692"/>
    </ligand>
</feature>
<feature type="binding site" evidence="3">
    <location>
        <position position="180"/>
    </location>
    <ligand>
        <name>FAD</name>
        <dbReference type="ChEBI" id="CHEBI:57692"/>
    </ligand>
</feature>
<feature type="binding site" evidence="3">
    <location>
        <position position="231"/>
    </location>
    <ligand>
        <name>FAD</name>
        <dbReference type="ChEBI" id="CHEBI:57692"/>
    </ligand>
</feature>
<feature type="binding site" evidence="3">
    <location>
        <position position="479"/>
    </location>
    <ligand>
        <name>FAD</name>
        <dbReference type="ChEBI" id="CHEBI:57692"/>
    </ligand>
</feature>
<feature type="binding site" evidence="3">
    <location>
        <position position="517"/>
    </location>
    <ligand>
        <name>FAD</name>
        <dbReference type="ChEBI" id="CHEBI:57692"/>
    </ligand>
</feature>
<feature type="modified residue" description="Pros-8alpha-FAD histidine" evidence="3">
    <location>
        <position position="102"/>
    </location>
</feature>
<feature type="glycosylation site" description="N-linked (GlcNAc...) asparagine" evidence="4">
    <location>
        <position position="310"/>
    </location>
</feature>
<feature type="glycosylation site" description="N-linked (GlcNAc...) asparagine" evidence="4">
    <location>
        <position position="406"/>
    </location>
</feature>
<feature type="sequence conflict" description="In Ref. 1; AAG30909." evidence="8" ref="1">
    <original>F</original>
    <variation>L</variation>
    <location>
        <position position="185"/>
    </location>
</feature>
<dbReference type="EC" id="1.5.99.12" evidence="2"/>
<dbReference type="EMBL" id="AF303982">
    <property type="protein sequence ID" value="AAG30909.1"/>
    <property type="molecule type" value="mRNA"/>
</dbReference>
<dbReference type="EMBL" id="AC023754">
    <property type="protein sequence ID" value="AAG13068.1"/>
    <property type="status" value="ALT_SEQ"/>
    <property type="molecule type" value="Genomic_DNA"/>
</dbReference>
<dbReference type="EMBL" id="CP002684">
    <property type="protein sequence ID" value="AEE35721.1"/>
    <property type="molecule type" value="Genomic_DNA"/>
</dbReference>
<dbReference type="EMBL" id="AK176378">
    <property type="protein sequence ID" value="BAD44141.1"/>
    <property type="molecule type" value="mRNA"/>
</dbReference>
<dbReference type="PIR" id="B96785">
    <property type="entry name" value="B96785"/>
</dbReference>
<dbReference type="RefSeq" id="NP_177678.2">
    <molecule id="Q67YU0-1"/>
    <property type="nucleotide sequence ID" value="NM_106199.5"/>
</dbReference>
<dbReference type="SMR" id="Q67YU0"/>
<dbReference type="STRING" id="3702.Q67YU0"/>
<dbReference type="GlyCosmos" id="Q67YU0">
    <property type="glycosylation" value="2 sites, No reported glycans"/>
</dbReference>
<dbReference type="GlyGen" id="Q67YU0">
    <property type="glycosylation" value="2 sites"/>
</dbReference>
<dbReference type="PaxDb" id="3702-AT1G75450.1"/>
<dbReference type="ProteomicsDB" id="222094">
    <molecule id="Q67YU0-1"/>
</dbReference>
<dbReference type="EnsemblPlants" id="AT1G75450.1">
    <molecule id="Q67YU0-1"/>
    <property type="protein sequence ID" value="AT1G75450.1"/>
    <property type="gene ID" value="AT1G75450"/>
</dbReference>
<dbReference type="GeneID" id="843881"/>
<dbReference type="Gramene" id="AT1G75450.1">
    <molecule id="Q67YU0-1"/>
    <property type="protein sequence ID" value="AT1G75450.1"/>
    <property type="gene ID" value="AT1G75450"/>
</dbReference>
<dbReference type="KEGG" id="ath:AT1G75450"/>
<dbReference type="Araport" id="AT1G75450"/>
<dbReference type="TAIR" id="AT1G75450">
    <property type="gene designation" value="CKX5"/>
</dbReference>
<dbReference type="eggNOG" id="KOG1231">
    <property type="taxonomic scope" value="Eukaryota"/>
</dbReference>
<dbReference type="InParanoid" id="Q67YU0"/>
<dbReference type="OMA" id="PMNKSKW"/>
<dbReference type="PhylomeDB" id="Q67YU0"/>
<dbReference type="BioCyc" id="ARA:AT1G75450-MONOMER"/>
<dbReference type="PRO" id="PR:Q67YU0"/>
<dbReference type="Proteomes" id="UP000006548">
    <property type="component" value="Chromosome 1"/>
</dbReference>
<dbReference type="ExpressionAtlas" id="Q67YU0">
    <property type="expression patterns" value="baseline and differential"/>
</dbReference>
<dbReference type="GO" id="GO:0005576">
    <property type="term" value="C:extracellular region"/>
    <property type="evidence" value="ECO:0000304"/>
    <property type="project" value="TAIR"/>
</dbReference>
<dbReference type="GO" id="GO:0019139">
    <property type="term" value="F:cytokinin dehydrogenase activity"/>
    <property type="evidence" value="ECO:0000304"/>
    <property type="project" value="TAIR"/>
</dbReference>
<dbReference type="GO" id="GO:0071949">
    <property type="term" value="F:FAD binding"/>
    <property type="evidence" value="ECO:0007669"/>
    <property type="project" value="InterPro"/>
</dbReference>
<dbReference type="GO" id="GO:0009823">
    <property type="term" value="P:cytokinin catabolic process"/>
    <property type="evidence" value="ECO:0000304"/>
    <property type="project" value="TAIR"/>
</dbReference>
<dbReference type="FunFam" id="3.30.465.10:FF:000021">
    <property type="entry name" value="Cytokinin dehydrogenase 1"/>
    <property type="match status" value="1"/>
</dbReference>
<dbReference type="FunFam" id="3.40.462.10:FF:000001">
    <property type="entry name" value="Cytokinin dehydrogenase 2"/>
    <property type="match status" value="1"/>
</dbReference>
<dbReference type="Gene3D" id="3.30.465.10">
    <property type="match status" value="1"/>
</dbReference>
<dbReference type="Gene3D" id="3.40.462.10">
    <property type="entry name" value="FAD-linked oxidases, C-terminal domain"/>
    <property type="match status" value="1"/>
</dbReference>
<dbReference type="Gene3D" id="3.30.43.10">
    <property type="entry name" value="Uridine Diphospho-n-acetylenolpyruvylglucosamine Reductase, domain 2"/>
    <property type="match status" value="1"/>
</dbReference>
<dbReference type="InterPro" id="IPR016170">
    <property type="entry name" value="Cytok_DH_C_sf"/>
</dbReference>
<dbReference type="InterPro" id="IPR015345">
    <property type="entry name" value="Cytokinin_DH_FAD/cytokin-bd"/>
</dbReference>
<dbReference type="InterPro" id="IPR016166">
    <property type="entry name" value="FAD-bd_PCMH"/>
</dbReference>
<dbReference type="InterPro" id="IPR036318">
    <property type="entry name" value="FAD-bd_PCMH-like_sf"/>
</dbReference>
<dbReference type="InterPro" id="IPR016167">
    <property type="entry name" value="FAD-bd_PCMH_sub1"/>
</dbReference>
<dbReference type="InterPro" id="IPR016169">
    <property type="entry name" value="FAD-bd_PCMH_sub2"/>
</dbReference>
<dbReference type="InterPro" id="IPR016164">
    <property type="entry name" value="FAD-linked_Oxase-like_C"/>
</dbReference>
<dbReference type="InterPro" id="IPR050432">
    <property type="entry name" value="FAD-linked_Oxidoreductases_BP"/>
</dbReference>
<dbReference type="InterPro" id="IPR006094">
    <property type="entry name" value="Oxid_FAD_bind_N"/>
</dbReference>
<dbReference type="InterPro" id="IPR006093">
    <property type="entry name" value="Oxy_OxRdtase_FAD_BS"/>
</dbReference>
<dbReference type="PANTHER" id="PTHR13878:SF102">
    <property type="entry name" value="CYTOKININ DEHYDROGENASE 5"/>
    <property type="match status" value="1"/>
</dbReference>
<dbReference type="PANTHER" id="PTHR13878">
    <property type="entry name" value="GULONOLACTONE OXIDASE"/>
    <property type="match status" value="1"/>
</dbReference>
<dbReference type="Pfam" id="PF09265">
    <property type="entry name" value="Cytokin-bind"/>
    <property type="match status" value="1"/>
</dbReference>
<dbReference type="Pfam" id="PF01565">
    <property type="entry name" value="FAD_binding_4"/>
    <property type="match status" value="1"/>
</dbReference>
<dbReference type="SUPFAM" id="SSF56176">
    <property type="entry name" value="FAD-binding/transporter-associated domain-like"/>
    <property type="match status" value="1"/>
</dbReference>
<dbReference type="SUPFAM" id="SSF55103">
    <property type="entry name" value="FAD-linked oxidases, C-terminal domain"/>
    <property type="match status" value="1"/>
</dbReference>
<dbReference type="PROSITE" id="PS51387">
    <property type="entry name" value="FAD_PCMH"/>
    <property type="match status" value="1"/>
</dbReference>
<dbReference type="PROSITE" id="PS00862">
    <property type="entry name" value="OX2_COVAL_FAD"/>
    <property type="match status" value="1"/>
</dbReference>
<keyword id="KW-0025">Alternative splicing</keyword>
<keyword id="KW-0274">FAD</keyword>
<keyword id="KW-0285">Flavoprotein</keyword>
<keyword id="KW-0325">Glycoprotein</keyword>
<keyword id="KW-0560">Oxidoreductase</keyword>
<keyword id="KW-1185">Reference proteome</keyword>
<keyword id="KW-0964">Secreted</keyword>
<keyword id="KW-0732">Signal</keyword>
<comment type="function">
    <text evidence="2 7">Catalyzes the oxidation of cytokinins, a family of N(6)-substituted adenine derivatives that are plant hormones, where the substituent is an isopentenyl group (By similarity). In association with CKX3 regulates the activity of the reproductive meristems, flower organ size and ovule formation (PubMed:21224426).</text>
</comment>
<comment type="catalytic activity">
    <reaction evidence="2">
        <text>N(6)-dimethylallyladenine + A + H2O = 3-methyl-2-butenal + adenine + AH2</text>
        <dbReference type="Rhea" id="RHEA:13625"/>
        <dbReference type="ChEBI" id="CHEBI:13193"/>
        <dbReference type="ChEBI" id="CHEBI:15377"/>
        <dbReference type="ChEBI" id="CHEBI:15825"/>
        <dbReference type="ChEBI" id="CHEBI:16708"/>
        <dbReference type="ChEBI" id="CHEBI:17499"/>
        <dbReference type="ChEBI" id="CHEBI:17660"/>
        <dbReference type="EC" id="1.5.99.12"/>
    </reaction>
</comment>
<comment type="cofactor">
    <cofactor evidence="2">
        <name>FAD</name>
        <dbReference type="ChEBI" id="CHEBI:57692"/>
    </cofactor>
</comment>
<comment type="subcellular location">
    <subcellularLocation>
        <location evidence="1">Secreted</location>
        <location evidence="1">Extracellular space</location>
    </subcellularLocation>
</comment>
<comment type="alternative products">
    <event type="alternative splicing"/>
    <isoform>
        <id>Q67YU0-1</id>
        <name>1</name>
        <sequence type="displayed"/>
    </isoform>
    <text>A number of isoforms are produced. According to EST sequences.</text>
</comment>
<comment type="tissue specificity">
    <text evidence="6">Expressed in the developing leaf petioles and in the rib zone of the axillary shoot meristems. In roots, expressed in the vascular cylinder within the root apical meristem and only faintly detectable in the differentiated root.</text>
</comment>
<comment type="developmental stage">
    <text evidence="6">Expressed in young developing stamen primordia and later confined to the central part of growing anthers. Before and during pollination, restricted to the maturing pollen grains.</text>
</comment>
<comment type="similarity">
    <text evidence="8">Belongs to the oxygen-dependent FAD-linked oxidoreductase family.</text>
</comment>
<comment type="sequence caution" evidence="8">
    <conflict type="erroneous gene model prediction">
        <sequence resource="EMBL-CDS" id="AAG13068"/>
    </conflict>
</comment>
<protein>
    <recommendedName>
        <fullName>Cytokinin dehydrogenase 5</fullName>
        <ecNumber evidence="2">1.5.99.12</ecNumber>
    </recommendedName>
    <alternativeName>
        <fullName>Cytokinin oxidase 5</fullName>
        <shortName>AtCKX5</shortName>
        <shortName>AtCKX6</shortName>
        <shortName>CKO5</shortName>
    </alternativeName>
</protein>
<name>CKX5_ARATH</name>
<proteinExistence type="evidence at transcript level"/>
<organism>
    <name type="scientific">Arabidopsis thaliana</name>
    <name type="common">Mouse-ear cress</name>
    <dbReference type="NCBI Taxonomy" id="3702"/>
    <lineage>
        <taxon>Eukaryota</taxon>
        <taxon>Viridiplantae</taxon>
        <taxon>Streptophyta</taxon>
        <taxon>Embryophyta</taxon>
        <taxon>Tracheophyta</taxon>
        <taxon>Spermatophyta</taxon>
        <taxon>Magnoliopsida</taxon>
        <taxon>eudicotyledons</taxon>
        <taxon>Gunneridae</taxon>
        <taxon>Pentapetalae</taxon>
        <taxon>rosids</taxon>
        <taxon>malvids</taxon>
        <taxon>Brassicales</taxon>
        <taxon>Brassicaceae</taxon>
        <taxon>Camelineae</taxon>
        <taxon>Arabidopsis</taxon>
    </lineage>
</organism>